<organism>
    <name type="scientific">Novosphingobium aromaticivorans (strain ATCC 700278 / DSM 12444 / CCUG 56034 / CIP 105152 / NBRC 16084 / F199)</name>
    <dbReference type="NCBI Taxonomy" id="279238"/>
    <lineage>
        <taxon>Bacteria</taxon>
        <taxon>Pseudomonadati</taxon>
        <taxon>Pseudomonadota</taxon>
        <taxon>Alphaproteobacteria</taxon>
        <taxon>Sphingomonadales</taxon>
        <taxon>Sphingomonadaceae</taxon>
        <taxon>Novosphingobium</taxon>
    </lineage>
</organism>
<protein>
    <recommendedName>
        <fullName evidence="1">Methionyl-tRNA formyltransferase</fullName>
        <ecNumber evidence="1">2.1.2.9</ecNumber>
    </recommendedName>
</protein>
<dbReference type="EC" id="2.1.2.9" evidence="1"/>
<dbReference type="EMBL" id="CP000248">
    <property type="protein sequence ID" value="ABD27330.1"/>
    <property type="molecule type" value="Genomic_DNA"/>
</dbReference>
<dbReference type="RefSeq" id="WP_011446534.1">
    <property type="nucleotide sequence ID" value="NC_007794.1"/>
</dbReference>
<dbReference type="SMR" id="Q2G493"/>
<dbReference type="STRING" id="279238.Saro_2894"/>
<dbReference type="KEGG" id="nar:Saro_2894"/>
<dbReference type="eggNOG" id="COG0223">
    <property type="taxonomic scope" value="Bacteria"/>
</dbReference>
<dbReference type="HOGENOM" id="CLU_033347_1_2_5"/>
<dbReference type="Proteomes" id="UP000009134">
    <property type="component" value="Chromosome"/>
</dbReference>
<dbReference type="GO" id="GO:0005829">
    <property type="term" value="C:cytosol"/>
    <property type="evidence" value="ECO:0007669"/>
    <property type="project" value="TreeGrafter"/>
</dbReference>
<dbReference type="GO" id="GO:0004479">
    <property type="term" value="F:methionyl-tRNA formyltransferase activity"/>
    <property type="evidence" value="ECO:0007669"/>
    <property type="project" value="UniProtKB-UniRule"/>
</dbReference>
<dbReference type="CDD" id="cd08646">
    <property type="entry name" value="FMT_core_Met-tRNA-FMT_N"/>
    <property type="match status" value="1"/>
</dbReference>
<dbReference type="CDD" id="cd08704">
    <property type="entry name" value="Met_tRNA_FMT_C"/>
    <property type="match status" value="1"/>
</dbReference>
<dbReference type="Gene3D" id="3.40.50.12230">
    <property type="match status" value="1"/>
</dbReference>
<dbReference type="HAMAP" id="MF_00182">
    <property type="entry name" value="Formyl_trans"/>
    <property type="match status" value="1"/>
</dbReference>
<dbReference type="InterPro" id="IPR005794">
    <property type="entry name" value="Fmt"/>
</dbReference>
<dbReference type="InterPro" id="IPR005793">
    <property type="entry name" value="Formyl_trans_C"/>
</dbReference>
<dbReference type="InterPro" id="IPR002376">
    <property type="entry name" value="Formyl_transf_N"/>
</dbReference>
<dbReference type="InterPro" id="IPR036477">
    <property type="entry name" value="Formyl_transf_N_sf"/>
</dbReference>
<dbReference type="InterPro" id="IPR011034">
    <property type="entry name" value="Formyl_transferase-like_C_sf"/>
</dbReference>
<dbReference type="InterPro" id="IPR044135">
    <property type="entry name" value="Met-tRNA-FMT_C"/>
</dbReference>
<dbReference type="InterPro" id="IPR041711">
    <property type="entry name" value="Met-tRNA-FMT_N"/>
</dbReference>
<dbReference type="NCBIfam" id="TIGR00460">
    <property type="entry name" value="fmt"/>
    <property type="match status" value="1"/>
</dbReference>
<dbReference type="PANTHER" id="PTHR11138">
    <property type="entry name" value="METHIONYL-TRNA FORMYLTRANSFERASE"/>
    <property type="match status" value="1"/>
</dbReference>
<dbReference type="PANTHER" id="PTHR11138:SF5">
    <property type="entry name" value="METHIONYL-TRNA FORMYLTRANSFERASE, MITOCHONDRIAL"/>
    <property type="match status" value="1"/>
</dbReference>
<dbReference type="Pfam" id="PF02911">
    <property type="entry name" value="Formyl_trans_C"/>
    <property type="match status" value="1"/>
</dbReference>
<dbReference type="Pfam" id="PF00551">
    <property type="entry name" value="Formyl_trans_N"/>
    <property type="match status" value="1"/>
</dbReference>
<dbReference type="SUPFAM" id="SSF50486">
    <property type="entry name" value="FMT C-terminal domain-like"/>
    <property type="match status" value="1"/>
</dbReference>
<dbReference type="SUPFAM" id="SSF53328">
    <property type="entry name" value="Formyltransferase"/>
    <property type="match status" value="1"/>
</dbReference>
<comment type="function">
    <text evidence="1">Attaches a formyl group to the free amino group of methionyl-tRNA(fMet). The formyl group appears to play a dual role in the initiator identity of N-formylmethionyl-tRNA by promoting its recognition by IF2 and preventing the misappropriation of this tRNA by the elongation apparatus.</text>
</comment>
<comment type="catalytic activity">
    <reaction evidence="1">
        <text>L-methionyl-tRNA(fMet) + (6R)-10-formyltetrahydrofolate = N-formyl-L-methionyl-tRNA(fMet) + (6S)-5,6,7,8-tetrahydrofolate + H(+)</text>
        <dbReference type="Rhea" id="RHEA:24380"/>
        <dbReference type="Rhea" id="RHEA-COMP:9952"/>
        <dbReference type="Rhea" id="RHEA-COMP:9953"/>
        <dbReference type="ChEBI" id="CHEBI:15378"/>
        <dbReference type="ChEBI" id="CHEBI:57453"/>
        <dbReference type="ChEBI" id="CHEBI:78530"/>
        <dbReference type="ChEBI" id="CHEBI:78844"/>
        <dbReference type="ChEBI" id="CHEBI:195366"/>
        <dbReference type="EC" id="2.1.2.9"/>
    </reaction>
</comment>
<comment type="similarity">
    <text evidence="1">Belongs to the Fmt family.</text>
</comment>
<accession>Q2G493</accession>
<sequence>MRIIFMGTPDFAVPTLEALVAAGHDVVAAYSQPPRPAGRGKKLQPSPVHLAAEAHGIDVRTPVSLKGADEQTTLAAFDADVAVVAAYGLILPQAVLDAPRLGCLNVHGSLLPRWRGAAPVQRAILAGDEMTGVTIMQMERGLDTGPMLARIETPVDGKTAGDLTAELAVKGAALMVQVLADLASYPAVVQPEQGVTYAHKIDKAESRLDFTRDAVDVERQVRAFSPAPGAFFELEGERYRVLAAEVLGVAGEPGVTVDDVLAIACGTGAIRPTLIQRAGRPAMDTASLLRGRAIPGGTRLG</sequence>
<feature type="chain" id="PRO_1000020114" description="Methionyl-tRNA formyltransferase">
    <location>
        <begin position="1"/>
        <end position="301"/>
    </location>
</feature>
<feature type="binding site" evidence="1">
    <location>
        <begin position="109"/>
        <end position="112"/>
    </location>
    <ligand>
        <name>(6S)-5,6,7,8-tetrahydrofolate</name>
        <dbReference type="ChEBI" id="CHEBI:57453"/>
    </ligand>
</feature>
<reference key="1">
    <citation type="submission" date="2006-01" db="EMBL/GenBank/DDBJ databases">
        <title>Complete sequence of Novosphingobium aromaticivorans DSM 12444.</title>
        <authorList>
            <consortium name="US DOE Joint Genome Institute"/>
            <person name="Copeland A."/>
            <person name="Lucas S."/>
            <person name="Lapidus A."/>
            <person name="Barry K."/>
            <person name="Detter J.C."/>
            <person name="Glavina T."/>
            <person name="Hammon N."/>
            <person name="Israni S."/>
            <person name="Pitluck S."/>
            <person name="Chain P."/>
            <person name="Malfatti S."/>
            <person name="Shin M."/>
            <person name="Vergez L."/>
            <person name="Schmutz J."/>
            <person name="Larimer F."/>
            <person name="Land M."/>
            <person name="Kyrpides N."/>
            <person name="Ivanova N."/>
            <person name="Fredrickson J."/>
            <person name="Balkwill D."/>
            <person name="Romine M.F."/>
            <person name="Richardson P."/>
        </authorList>
    </citation>
    <scope>NUCLEOTIDE SEQUENCE [LARGE SCALE GENOMIC DNA]</scope>
    <source>
        <strain>ATCC 700278 / DSM 12444 / CCUG 56034 / CIP 105152 / NBRC 16084 / F199</strain>
    </source>
</reference>
<evidence type="ECO:0000255" key="1">
    <source>
        <dbReference type="HAMAP-Rule" id="MF_00182"/>
    </source>
</evidence>
<name>FMT_NOVAD</name>
<gene>
    <name evidence="1" type="primary">fmt</name>
    <name type="ordered locus">Saro_2894</name>
</gene>
<proteinExistence type="inferred from homology"/>
<keyword id="KW-0648">Protein biosynthesis</keyword>
<keyword id="KW-1185">Reference proteome</keyword>
<keyword id="KW-0808">Transferase</keyword>